<protein>
    <recommendedName>
        <fullName>Glycerol-3-phosphate acyltransferase</fullName>
    </recommendedName>
    <alternativeName>
        <fullName>Acyl-PO4 G3P acyltransferase</fullName>
    </alternativeName>
    <alternativeName>
        <fullName>Acyl-phosphate--glycerol-3-phosphate acyltransferase</fullName>
    </alternativeName>
    <alternativeName>
        <fullName>G3P acyltransferase</fullName>
        <shortName>GPAT</shortName>
        <ecNumber>2.3.1.275</ecNumber>
    </alternativeName>
    <alternativeName>
        <fullName>Lysophosphatidic acid synthase</fullName>
        <shortName>LPA synthase</shortName>
    </alternativeName>
</protein>
<feature type="chain" id="PRO_0000188326" description="Glycerol-3-phosphate acyltransferase">
    <location>
        <begin position="1"/>
        <end position="193"/>
    </location>
</feature>
<feature type="transmembrane region" description="Helical" evidence="1">
    <location>
        <begin position="2"/>
        <end position="22"/>
    </location>
</feature>
<feature type="transmembrane region" description="Helical" evidence="1">
    <location>
        <begin position="54"/>
        <end position="74"/>
    </location>
</feature>
<feature type="transmembrane region" description="Helical" evidence="1">
    <location>
        <begin position="76"/>
        <end position="96"/>
    </location>
</feature>
<feature type="transmembrane region" description="Helical" evidence="1">
    <location>
        <begin position="111"/>
        <end position="131"/>
    </location>
</feature>
<feature type="transmembrane region" description="Helical" evidence="1">
    <location>
        <begin position="153"/>
        <end position="173"/>
    </location>
</feature>
<keyword id="KW-1003">Cell membrane</keyword>
<keyword id="KW-0444">Lipid biosynthesis</keyword>
<keyword id="KW-0443">Lipid metabolism</keyword>
<keyword id="KW-0472">Membrane</keyword>
<keyword id="KW-0594">Phospholipid biosynthesis</keyword>
<keyword id="KW-1208">Phospholipid metabolism</keyword>
<keyword id="KW-1185">Reference proteome</keyword>
<keyword id="KW-0808">Transferase</keyword>
<keyword id="KW-0812">Transmembrane</keyword>
<keyword id="KW-1133">Transmembrane helix</keyword>
<evidence type="ECO:0000255" key="1"/>
<evidence type="ECO:0000269" key="2">
    <source>
    </source>
</evidence>
<evidence type="ECO:0000269" key="3">
    <source>
    </source>
</evidence>
<evidence type="ECO:0000269" key="4">
    <source>
    </source>
</evidence>
<evidence type="ECO:0000305" key="5"/>
<gene>
    <name type="primary">plsY</name>
    <name type="synonym">yneS</name>
    <name type="ordered locus">BSU18070</name>
</gene>
<sequence>MLIALLIILAYLIGSIPSGLIVGKLAKGIDIREHGSGNLGATNAFRTLGVKAGSVVIAGDILKGTLATALPFLMHVDIHPLLAGVFAVLGHVFPIFAKFKGGKAVATSGGVLLFYAPLLFITMVAVFFIFLYLTKFVSLSSMLTGIYTVIYSFFVHDTYLLIVVTLLTIFVIYRHRANIKRIINKTEPKVKWL</sequence>
<organism>
    <name type="scientific">Bacillus subtilis (strain 168)</name>
    <dbReference type="NCBI Taxonomy" id="224308"/>
    <lineage>
        <taxon>Bacteria</taxon>
        <taxon>Bacillati</taxon>
        <taxon>Bacillota</taxon>
        <taxon>Bacilli</taxon>
        <taxon>Bacillales</taxon>
        <taxon>Bacillaceae</taxon>
        <taxon>Bacillus</taxon>
    </lineage>
</organism>
<dbReference type="EC" id="2.3.1.275"/>
<dbReference type="EMBL" id="Z73234">
    <property type="protein sequence ID" value="CAA97604.1"/>
    <property type="molecule type" value="Genomic_DNA"/>
</dbReference>
<dbReference type="EMBL" id="AL009126">
    <property type="protein sequence ID" value="CAB13690.1"/>
    <property type="molecule type" value="Genomic_DNA"/>
</dbReference>
<dbReference type="PIR" id="A69892">
    <property type="entry name" value="A69892"/>
</dbReference>
<dbReference type="RefSeq" id="NP_389689.1">
    <property type="nucleotide sequence ID" value="NC_000964.3"/>
</dbReference>
<dbReference type="RefSeq" id="WP_003231560.1">
    <property type="nucleotide sequence ID" value="NZ_OZ025638.1"/>
</dbReference>
<dbReference type="SMR" id="Q45064"/>
<dbReference type="FunCoup" id="Q45064">
    <property type="interactions" value="276"/>
</dbReference>
<dbReference type="STRING" id="224308.BSU18070"/>
<dbReference type="TCDB" id="9.B.31.1.2">
    <property type="family name" value="the plsy/yqih (plsy) family"/>
</dbReference>
<dbReference type="PaxDb" id="224308-BSU18070"/>
<dbReference type="EnsemblBacteria" id="CAB13690">
    <property type="protein sequence ID" value="CAB13690"/>
    <property type="gene ID" value="BSU_18070"/>
</dbReference>
<dbReference type="GeneID" id="938037"/>
<dbReference type="KEGG" id="bsu:BSU18070"/>
<dbReference type="PATRIC" id="fig|224308.179.peg.1969"/>
<dbReference type="eggNOG" id="COG0344">
    <property type="taxonomic scope" value="Bacteria"/>
</dbReference>
<dbReference type="InParanoid" id="Q45064"/>
<dbReference type="OrthoDB" id="9777124at2"/>
<dbReference type="PhylomeDB" id="Q45064"/>
<dbReference type="BioCyc" id="BSUB:BSU18070-MONOMER"/>
<dbReference type="BRENDA" id="2.3.1.275">
    <property type="organism ID" value="658"/>
</dbReference>
<dbReference type="UniPathway" id="UPA00085"/>
<dbReference type="Proteomes" id="UP000001570">
    <property type="component" value="Chromosome"/>
</dbReference>
<dbReference type="GO" id="GO:0005886">
    <property type="term" value="C:plasma membrane"/>
    <property type="evidence" value="ECO:0000318"/>
    <property type="project" value="GO_Central"/>
</dbReference>
<dbReference type="GO" id="GO:0043772">
    <property type="term" value="F:acyl-phosphate glycerol-3-phosphate acyltransferase activity"/>
    <property type="evidence" value="ECO:0007669"/>
    <property type="project" value="UniProtKB-UniRule"/>
</dbReference>
<dbReference type="GO" id="GO:0008654">
    <property type="term" value="P:phospholipid biosynthetic process"/>
    <property type="evidence" value="ECO:0007669"/>
    <property type="project" value="UniProtKB-UniRule"/>
</dbReference>
<dbReference type="HAMAP" id="MF_01043">
    <property type="entry name" value="PlsY"/>
    <property type="match status" value="1"/>
</dbReference>
<dbReference type="InterPro" id="IPR003811">
    <property type="entry name" value="G3P_acylTferase_PlsY"/>
</dbReference>
<dbReference type="NCBIfam" id="TIGR00023">
    <property type="entry name" value="glycerol-3-phosphate 1-O-acyltransferase PlsY"/>
    <property type="match status" value="1"/>
</dbReference>
<dbReference type="PANTHER" id="PTHR30309:SF0">
    <property type="entry name" value="GLYCEROL-3-PHOSPHATE ACYLTRANSFERASE-RELATED"/>
    <property type="match status" value="1"/>
</dbReference>
<dbReference type="PANTHER" id="PTHR30309">
    <property type="entry name" value="INNER MEMBRANE PROTEIN YGIH"/>
    <property type="match status" value="1"/>
</dbReference>
<dbReference type="Pfam" id="PF02660">
    <property type="entry name" value="G3P_acyltransf"/>
    <property type="match status" value="1"/>
</dbReference>
<dbReference type="SMART" id="SM01207">
    <property type="entry name" value="G3P_acyltransf"/>
    <property type="match status" value="1"/>
</dbReference>
<proteinExistence type="evidence at protein level"/>
<comment type="function">
    <text evidence="2 3 4">Catalyzes the transfer of an acyl group from acyl-phosphate (acyl-PO(4)) to glycerol-3-phosphate (G3P) to form lysophosphatidic acid (LPA). This enzyme utilizes acyl-phosphate as fatty acyl donor, but not acyl-CoA or acyl-ACP.</text>
</comment>
<comment type="catalytic activity">
    <reaction>
        <text>an acyl phosphate + sn-glycerol 3-phosphate = a 1-acyl-sn-glycero-3-phosphate + phosphate</text>
        <dbReference type="Rhea" id="RHEA:34075"/>
        <dbReference type="ChEBI" id="CHEBI:43474"/>
        <dbReference type="ChEBI" id="CHEBI:57597"/>
        <dbReference type="ChEBI" id="CHEBI:57970"/>
        <dbReference type="ChEBI" id="CHEBI:59918"/>
        <dbReference type="EC" id="2.3.1.275"/>
    </reaction>
</comment>
<comment type="activity regulation">
    <text evidence="2">Inhibited by acyl-CoA.</text>
</comment>
<comment type="pathway">
    <text>Lipid metabolism; phospholipid metabolism.</text>
</comment>
<comment type="subunit">
    <text evidence="4">Probably interacts with PlsX.</text>
</comment>
<comment type="subcellular location">
    <subcellularLocation>
        <location evidence="5">Cell membrane</location>
        <topology evidence="5">Multi-pass membrane protein</topology>
    </subcellularLocation>
</comment>
<comment type="similarity">
    <text evidence="5">Belongs to the PlsY family.</text>
</comment>
<accession>Q45064</accession>
<reference key="1">
    <citation type="journal article" date="1996" name="Microbiology">
        <title>New genes in the 170 degrees region of the Bacillus subtilis genome encode DNA gyrase subunits, a thioredoxin, a xylanase and an amino acid transporter.</title>
        <authorList>
            <person name="Rose M."/>
            <person name="Entian K.-D."/>
        </authorList>
    </citation>
    <scope>NUCLEOTIDE SEQUENCE [GENOMIC DNA]</scope>
    <source>
        <strain>168</strain>
    </source>
</reference>
<reference key="2">
    <citation type="journal article" date="1997" name="Nature">
        <title>The complete genome sequence of the Gram-positive bacterium Bacillus subtilis.</title>
        <authorList>
            <person name="Kunst F."/>
            <person name="Ogasawara N."/>
            <person name="Moszer I."/>
            <person name="Albertini A.M."/>
            <person name="Alloni G."/>
            <person name="Azevedo V."/>
            <person name="Bertero M.G."/>
            <person name="Bessieres P."/>
            <person name="Bolotin A."/>
            <person name="Borchert S."/>
            <person name="Borriss R."/>
            <person name="Boursier L."/>
            <person name="Brans A."/>
            <person name="Braun M."/>
            <person name="Brignell S.C."/>
            <person name="Bron S."/>
            <person name="Brouillet S."/>
            <person name="Bruschi C.V."/>
            <person name="Caldwell B."/>
            <person name="Capuano V."/>
            <person name="Carter N.M."/>
            <person name="Choi S.-K."/>
            <person name="Codani J.-J."/>
            <person name="Connerton I.F."/>
            <person name="Cummings N.J."/>
            <person name="Daniel R.A."/>
            <person name="Denizot F."/>
            <person name="Devine K.M."/>
            <person name="Duesterhoeft A."/>
            <person name="Ehrlich S.D."/>
            <person name="Emmerson P.T."/>
            <person name="Entian K.-D."/>
            <person name="Errington J."/>
            <person name="Fabret C."/>
            <person name="Ferrari E."/>
            <person name="Foulger D."/>
            <person name="Fritz C."/>
            <person name="Fujita M."/>
            <person name="Fujita Y."/>
            <person name="Fuma S."/>
            <person name="Galizzi A."/>
            <person name="Galleron N."/>
            <person name="Ghim S.-Y."/>
            <person name="Glaser P."/>
            <person name="Goffeau A."/>
            <person name="Golightly E.J."/>
            <person name="Grandi G."/>
            <person name="Guiseppi G."/>
            <person name="Guy B.J."/>
            <person name="Haga K."/>
            <person name="Haiech J."/>
            <person name="Harwood C.R."/>
            <person name="Henaut A."/>
            <person name="Hilbert H."/>
            <person name="Holsappel S."/>
            <person name="Hosono S."/>
            <person name="Hullo M.-F."/>
            <person name="Itaya M."/>
            <person name="Jones L.-M."/>
            <person name="Joris B."/>
            <person name="Karamata D."/>
            <person name="Kasahara Y."/>
            <person name="Klaerr-Blanchard M."/>
            <person name="Klein C."/>
            <person name="Kobayashi Y."/>
            <person name="Koetter P."/>
            <person name="Koningstein G."/>
            <person name="Krogh S."/>
            <person name="Kumano M."/>
            <person name="Kurita K."/>
            <person name="Lapidus A."/>
            <person name="Lardinois S."/>
            <person name="Lauber J."/>
            <person name="Lazarevic V."/>
            <person name="Lee S.-M."/>
            <person name="Levine A."/>
            <person name="Liu H."/>
            <person name="Masuda S."/>
            <person name="Mauel C."/>
            <person name="Medigue C."/>
            <person name="Medina N."/>
            <person name="Mellado R.P."/>
            <person name="Mizuno M."/>
            <person name="Moestl D."/>
            <person name="Nakai S."/>
            <person name="Noback M."/>
            <person name="Noone D."/>
            <person name="O'Reilly M."/>
            <person name="Ogawa K."/>
            <person name="Ogiwara A."/>
            <person name="Oudega B."/>
            <person name="Park S.-H."/>
            <person name="Parro V."/>
            <person name="Pohl T.M."/>
            <person name="Portetelle D."/>
            <person name="Porwollik S."/>
            <person name="Prescott A.M."/>
            <person name="Presecan E."/>
            <person name="Pujic P."/>
            <person name="Purnelle B."/>
            <person name="Rapoport G."/>
            <person name="Rey M."/>
            <person name="Reynolds S."/>
            <person name="Rieger M."/>
            <person name="Rivolta C."/>
            <person name="Rocha E."/>
            <person name="Roche B."/>
            <person name="Rose M."/>
            <person name="Sadaie Y."/>
            <person name="Sato T."/>
            <person name="Scanlan E."/>
            <person name="Schleich S."/>
            <person name="Schroeter R."/>
            <person name="Scoffone F."/>
            <person name="Sekiguchi J."/>
            <person name="Sekowska A."/>
            <person name="Seror S.J."/>
            <person name="Serror P."/>
            <person name="Shin B.-S."/>
            <person name="Soldo B."/>
            <person name="Sorokin A."/>
            <person name="Tacconi E."/>
            <person name="Takagi T."/>
            <person name="Takahashi H."/>
            <person name="Takemaru K."/>
            <person name="Takeuchi M."/>
            <person name="Tamakoshi A."/>
            <person name="Tanaka T."/>
            <person name="Terpstra P."/>
            <person name="Tognoni A."/>
            <person name="Tosato V."/>
            <person name="Uchiyama S."/>
            <person name="Vandenbol M."/>
            <person name="Vannier F."/>
            <person name="Vassarotti A."/>
            <person name="Viari A."/>
            <person name="Wambutt R."/>
            <person name="Wedler E."/>
            <person name="Wedler H."/>
            <person name="Weitzenegger T."/>
            <person name="Winters P."/>
            <person name="Wipat A."/>
            <person name="Yamamoto H."/>
            <person name="Yamane K."/>
            <person name="Yasumoto K."/>
            <person name="Yata K."/>
            <person name="Yoshida K."/>
            <person name="Yoshikawa H.-F."/>
            <person name="Zumstein E."/>
            <person name="Yoshikawa H."/>
            <person name="Danchin A."/>
        </authorList>
    </citation>
    <scope>NUCLEOTIDE SEQUENCE [LARGE SCALE GENOMIC DNA]</scope>
    <source>
        <strain>168</strain>
    </source>
</reference>
<reference key="3">
    <citation type="journal article" date="2007" name="BMC Microbiol.">
        <title>Involvement of the YneS/YgiH and PlsX proteins in phospholipid biosynthesis in both Bacillus subtilis and Escherichia coli.</title>
        <authorList>
            <person name="Yoshimura M."/>
            <person name="Oshima T."/>
            <person name="Ogasawara N."/>
        </authorList>
    </citation>
    <scope>FUNCTION IN PHOSPHOLIPID BIOSYNTHESIS</scope>
    <source>
        <strain>168</strain>
    </source>
</reference>
<reference key="4">
    <citation type="journal article" date="2007" name="J. Bacteriol.">
        <title>Coupling of fatty acid and phospholipid synthesis in Bacillus subtilis.</title>
        <authorList>
            <person name="Paoletti L."/>
            <person name="Lu Y.-J."/>
            <person name="Schujman G.E."/>
            <person name="de Mendoza D."/>
            <person name="Rock C.O."/>
        </authorList>
    </citation>
    <scope>FUNCTION</scope>
    <scope>ACTIVITY REGULATION</scope>
</reference>
<reference key="5">
    <citation type="journal article" date="2008" name="Genes Genet. Syst.">
        <title>Involvement of PlsX and the acyl-phosphate dependent sn-glycerol-3-phosphate acyltransferase PlsY in the initial stage of glycerolipid synthesis in Bacillus subtilis.</title>
        <authorList>
            <person name="Hara Y."/>
            <person name="Seki M."/>
            <person name="Matsuoka S."/>
            <person name="Hara H."/>
            <person name="Yamashita A."/>
            <person name="Matsumoto K."/>
        </authorList>
    </citation>
    <scope>FUNCTION</scope>
    <scope>INTERACTION</scope>
    <source>
        <strain>168</strain>
    </source>
</reference>
<name>PLSY_BACSU</name>